<proteinExistence type="inferred from homology"/>
<protein>
    <recommendedName>
        <fullName evidence="1">SsrA-binding protein</fullName>
    </recommendedName>
    <alternativeName>
        <fullName evidence="1">Small protein B</fullName>
    </alternativeName>
</protein>
<gene>
    <name evidence="1" type="primary">smpB</name>
    <name type="ordered locus">MRA_3132</name>
</gene>
<comment type="function">
    <text evidence="1">Required for rescue of stalled ribosomes mediated by trans-translation. Binds to transfer-messenger RNA (tmRNA), required for stable association of tmRNA with ribosomes. tmRNA and SmpB together mimic tRNA shape, replacing the anticodon stem-loop with SmpB. tmRNA is encoded by the ssrA gene; the 2 termini fold to resemble tRNA(Ala) and it encodes a 'tag peptide', a short internal open reading frame. During trans-translation Ala-aminoacylated tmRNA acts like a tRNA, entering the A-site of stalled ribosomes, displacing the stalled mRNA. The ribosome then switches to translate the ORF on the tmRNA; the nascent peptide is terminated with the 'tag peptide' encoded by the tmRNA and targeted for degradation. The ribosome is freed to recommence translation, which seems to be the essential function of trans-translation.</text>
</comment>
<comment type="subcellular location">
    <subcellularLocation>
        <location evidence="1">Cytoplasm</location>
    </subcellularLocation>
    <text evidence="1">The tmRNA-SmpB complex associates with stalled 70S ribosomes.</text>
</comment>
<comment type="similarity">
    <text evidence="1">Belongs to the SmpB family.</text>
</comment>
<evidence type="ECO:0000255" key="1">
    <source>
        <dbReference type="HAMAP-Rule" id="MF_00023"/>
    </source>
</evidence>
<name>SSRP_MYCTA</name>
<dbReference type="EMBL" id="CP000611">
    <property type="protein sequence ID" value="ABQ74915.1"/>
    <property type="molecule type" value="Genomic_DNA"/>
</dbReference>
<dbReference type="RefSeq" id="WP_003416113.1">
    <property type="nucleotide sequence ID" value="NZ_CP016972.1"/>
</dbReference>
<dbReference type="SMR" id="A5U7B5"/>
<dbReference type="GeneID" id="45427099"/>
<dbReference type="KEGG" id="mra:MRA_3132"/>
<dbReference type="eggNOG" id="COG0691">
    <property type="taxonomic scope" value="Bacteria"/>
</dbReference>
<dbReference type="HOGENOM" id="CLU_108953_2_1_11"/>
<dbReference type="Proteomes" id="UP000001988">
    <property type="component" value="Chromosome"/>
</dbReference>
<dbReference type="GO" id="GO:0005829">
    <property type="term" value="C:cytosol"/>
    <property type="evidence" value="ECO:0007669"/>
    <property type="project" value="TreeGrafter"/>
</dbReference>
<dbReference type="GO" id="GO:0003723">
    <property type="term" value="F:RNA binding"/>
    <property type="evidence" value="ECO:0007669"/>
    <property type="project" value="UniProtKB-UniRule"/>
</dbReference>
<dbReference type="GO" id="GO:0070929">
    <property type="term" value="P:trans-translation"/>
    <property type="evidence" value="ECO:0007669"/>
    <property type="project" value="UniProtKB-UniRule"/>
</dbReference>
<dbReference type="CDD" id="cd09294">
    <property type="entry name" value="SmpB"/>
    <property type="match status" value="1"/>
</dbReference>
<dbReference type="Gene3D" id="2.40.280.10">
    <property type="match status" value="1"/>
</dbReference>
<dbReference type="HAMAP" id="MF_00023">
    <property type="entry name" value="SmpB"/>
    <property type="match status" value="1"/>
</dbReference>
<dbReference type="InterPro" id="IPR023620">
    <property type="entry name" value="SmpB"/>
</dbReference>
<dbReference type="InterPro" id="IPR000037">
    <property type="entry name" value="SsrA-bd_prot"/>
</dbReference>
<dbReference type="InterPro" id="IPR020081">
    <property type="entry name" value="SsrA-bd_prot_CS"/>
</dbReference>
<dbReference type="NCBIfam" id="NF003843">
    <property type="entry name" value="PRK05422.1"/>
    <property type="match status" value="1"/>
</dbReference>
<dbReference type="NCBIfam" id="TIGR00086">
    <property type="entry name" value="smpB"/>
    <property type="match status" value="1"/>
</dbReference>
<dbReference type="PANTHER" id="PTHR30308:SF2">
    <property type="entry name" value="SSRA-BINDING PROTEIN"/>
    <property type="match status" value="1"/>
</dbReference>
<dbReference type="PANTHER" id="PTHR30308">
    <property type="entry name" value="TMRNA-BINDING COMPONENT OF TRANS-TRANSLATION TAGGING COMPLEX"/>
    <property type="match status" value="1"/>
</dbReference>
<dbReference type="Pfam" id="PF01668">
    <property type="entry name" value="SmpB"/>
    <property type="match status" value="1"/>
</dbReference>
<dbReference type="SUPFAM" id="SSF74982">
    <property type="entry name" value="Small protein B (SmpB)"/>
    <property type="match status" value="1"/>
</dbReference>
<dbReference type="PROSITE" id="PS01317">
    <property type="entry name" value="SSRP"/>
    <property type="match status" value="1"/>
</dbReference>
<keyword id="KW-0963">Cytoplasm</keyword>
<keyword id="KW-1185">Reference proteome</keyword>
<keyword id="KW-0694">RNA-binding</keyword>
<feature type="chain" id="PRO_1000002087" description="SsrA-binding protein">
    <location>
        <begin position="1"/>
        <end position="160"/>
    </location>
</feature>
<sequence length="160" mass="18230">MSKSSRGGRQIVASNRKARHNYSIIEVFEAGVALQGTEVKSLREGQASLADSFATIDDGEVWLRNAHIPEYRHGSWTNHEPRRNRKLLLHRRQIDTLVGKIREGNFALVPLSLYFAEGKVKVELALARGKQARDKRQDMARRDAQREVLRELGRRAKGMT</sequence>
<organism>
    <name type="scientific">Mycobacterium tuberculosis (strain ATCC 25177 / H37Ra)</name>
    <dbReference type="NCBI Taxonomy" id="419947"/>
    <lineage>
        <taxon>Bacteria</taxon>
        <taxon>Bacillati</taxon>
        <taxon>Actinomycetota</taxon>
        <taxon>Actinomycetes</taxon>
        <taxon>Mycobacteriales</taxon>
        <taxon>Mycobacteriaceae</taxon>
        <taxon>Mycobacterium</taxon>
        <taxon>Mycobacterium tuberculosis complex</taxon>
    </lineage>
</organism>
<reference key="1">
    <citation type="journal article" date="2008" name="PLoS ONE">
        <title>Genetic basis of virulence attenuation revealed by comparative genomic analysis of Mycobacterium tuberculosis strain H37Ra versus H37Rv.</title>
        <authorList>
            <person name="Zheng H."/>
            <person name="Lu L."/>
            <person name="Wang B."/>
            <person name="Pu S."/>
            <person name="Zhang X."/>
            <person name="Zhu G."/>
            <person name="Shi W."/>
            <person name="Zhang L."/>
            <person name="Wang H."/>
            <person name="Wang S."/>
            <person name="Zhao G."/>
            <person name="Zhang Y."/>
        </authorList>
    </citation>
    <scope>NUCLEOTIDE SEQUENCE [LARGE SCALE GENOMIC DNA]</scope>
    <source>
        <strain>ATCC 25177 / H37Ra</strain>
    </source>
</reference>
<accession>A5U7B5</accession>